<feature type="chain" id="PRO_0000320904" description="Protein translocase subunit SecA">
    <location>
        <begin position="1"/>
        <end position="913"/>
    </location>
</feature>
<feature type="binding site" evidence="1">
    <location>
        <position position="87"/>
    </location>
    <ligand>
        <name>ATP</name>
        <dbReference type="ChEBI" id="CHEBI:30616"/>
    </ligand>
</feature>
<feature type="binding site" evidence="1">
    <location>
        <begin position="105"/>
        <end position="109"/>
    </location>
    <ligand>
        <name>ATP</name>
        <dbReference type="ChEBI" id="CHEBI:30616"/>
    </ligand>
</feature>
<feature type="binding site" evidence="1">
    <location>
        <position position="512"/>
    </location>
    <ligand>
        <name>ATP</name>
        <dbReference type="ChEBI" id="CHEBI:30616"/>
    </ligand>
</feature>
<feature type="binding site" evidence="1">
    <location>
        <position position="897"/>
    </location>
    <ligand>
        <name>Zn(2+)</name>
        <dbReference type="ChEBI" id="CHEBI:29105"/>
    </ligand>
</feature>
<feature type="binding site" evidence="1">
    <location>
        <position position="899"/>
    </location>
    <ligand>
        <name>Zn(2+)</name>
        <dbReference type="ChEBI" id="CHEBI:29105"/>
    </ligand>
</feature>
<feature type="binding site" evidence="1">
    <location>
        <position position="908"/>
    </location>
    <ligand>
        <name>Zn(2+)</name>
        <dbReference type="ChEBI" id="CHEBI:29105"/>
    </ligand>
</feature>
<feature type="binding site" evidence="1">
    <location>
        <position position="909"/>
    </location>
    <ligand>
        <name>Zn(2+)</name>
        <dbReference type="ChEBI" id="CHEBI:29105"/>
    </ligand>
</feature>
<dbReference type="EC" id="7.4.2.8" evidence="1"/>
<dbReference type="EMBL" id="CP000075">
    <property type="protein sequence ID" value="AAY39124.1"/>
    <property type="molecule type" value="Genomic_DNA"/>
</dbReference>
<dbReference type="RefSeq" id="WP_011268842.1">
    <property type="nucleotide sequence ID" value="NC_007005.1"/>
</dbReference>
<dbReference type="RefSeq" id="YP_237162.1">
    <property type="nucleotide sequence ID" value="NC_007005.1"/>
</dbReference>
<dbReference type="SMR" id="Q4ZNZ8"/>
<dbReference type="STRING" id="205918.Psyr_4094"/>
<dbReference type="KEGG" id="psb:Psyr_4094"/>
<dbReference type="PATRIC" id="fig|205918.7.peg.4212"/>
<dbReference type="eggNOG" id="COG0653">
    <property type="taxonomic scope" value="Bacteria"/>
</dbReference>
<dbReference type="HOGENOM" id="CLU_005314_3_0_6"/>
<dbReference type="OrthoDB" id="9805579at2"/>
<dbReference type="Proteomes" id="UP000000426">
    <property type="component" value="Chromosome"/>
</dbReference>
<dbReference type="GO" id="GO:0031522">
    <property type="term" value="C:cell envelope Sec protein transport complex"/>
    <property type="evidence" value="ECO:0007669"/>
    <property type="project" value="TreeGrafter"/>
</dbReference>
<dbReference type="GO" id="GO:0005829">
    <property type="term" value="C:cytosol"/>
    <property type="evidence" value="ECO:0007669"/>
    <property type="project" value="TreeGrafter"/>
</dbReference>
<dbReference type="GO" id="GO:0005886">
    <property type="term" value="C:plasma membrane"/>
    <property type="evidence" value="ECO:0007669"/>
    <property type="project" value="UniProtKB-SubCell"/>
</dbReference>
<dbReference type="GO" id="GO:0005524">
    <property type="term" value="F:ATP binding"/>
    <property type="evidence" value="ECO:0007669"/>
    <property type="project" value="UniProtKB-UniRule"/>
</dbReference>
<dbReference type="GO" id="GO:0046872">
    <property type="term" value="F:metal ion binding"/>
    <property type="evidence" value="ECO:0007669"/>
    <property type="project" value="UniProtKB-KW"/>
</dbReference>
<dbReference type="GO" id="GO:0008564">
    <property type="term" value="F:protein-exporting ATPase activity"/>
    <property type="evidence" value="ECO:0007669"/>
    <property type="project" value="UniProtKB-EC"/>
</dbReference>
<dbReference type="GO" id="GO:0065002">
    <property type="term" value="P:intracellular protein transmembrane transport"/>
    <property type="evidence" value="ECO:0007669"/>
    <property type="project" value="UniProtKB-UniRule"/>
</dbReference>
<dbReference type="GO" id="GO:0017038">
    <property type="term" value="P:protein import"/>
    <property type="evidence" value="ECO:0007669"/>
    <property type="project" value="InterPro"/>
</dbReference>
<dbReference type="GO" id="GO:0006605">
    <property type="term" value="P:protein targeting"/>
    <property type="evidence" value="ECO:0007669"/>
    <property type="project" value="UniProtKB-UniRule"/>
</dbReference>
<dbReference type="GO" id="GO:0043952">
    <property type="term" value="P:protein transport by the Sec complex"/>
    <property type="evidence" value="ECO:0007669"/>
    <property type="project" value="TreeGrafter"/>
</dbReference>
<dbReference type="CDD" id="cd17928">
    <property type="entry name" value="DEXDc_SecA"/>
    <property type="match status" value="1"/>
</dbReference>
<dbReference type="CDD" id="cd18803">
    <property type="entry name" value="SF2_C_secA"/>
    <property type="match status" value="1"/>
</dbReference>
<dbReference type="FunFam" id="3.40.50.300:FF:000081">
    <property type="entry name" value="Preprotein translocase subunit SecA"/>
    <property type="match status" value="1"/>
</dbReference>
<dbReference type="FunFam" id="3.40.50.300:FF:000113">
    <property type="entry name" value="Preprotein translocase subunit SecA"/>
    <property type="match status" value="1"/>
</dbReference>
<dbReference type="FunFam" id="3.90.1440.10:FF:000001">
    <property type="entry name" value="Preprotein translocase subunit SecA"/>
    <property type="match status" value="1"/>
</dbReference>
<dbReference type="FunFam" id="1.10.3060.10:FF:000003">
    <property type="entry name" value="Protein translocase subunit SecA"/>
    <property type="match status" value="1"/>
</dbReference>
<dbReference type="Gene3D" id="1.10.3060.10">
    <property type="entry name" value="Helical scaffold and wing domains of SecA"/>
    <property type="match status" value="1"/>
</dbReference>
<dbReference type="Gene3D" id="3.40.50.300">
    <property type="entry name" value="P-loop containing nucleotide triphosphate hydrolases"/>
    <property type="match status" value="2"/>
</dbReference>
<dbReference type="Gene3D" id="3.90.1440.10">
    <property type="entry name" value="SecA, preprotein cross-linking domain"/>
    <property type="match status" value="1"/>
</dbReference>
<dbReference type="HAMAP" id="MF_01382">
    <property type="entry name" value="SecA"/>
    <property type="match status" value="1"/>
</dbReference>
<dbReference type="InterPro" id="IPR014001">
    <property type="entry name" value="Helicase_ATP-bd"/>
</dbReference>
<dbReference type="InterPro" id="IPR027417">
    <property type="entry name" value="P-loop_NTPase"/>
</dbReference>
<dbReference type="InterPro" id="IPR004027">
    <property type="entry name" value="SEC_C_motif"/>
</dbReference>
<dbReference type="InterPro" id="IPR000185">
    <property type="entry name" value="SecA"/>
</dbReference>
<dbReference type="InterPro" id="IPR011115">
    <property type="entry name" value="SecA_DEAD"/>
</dbReference>
<dbReference type="InterPro" id="IPR014018">
    <property type="entry name" value="SecA_motor_DEAD"/>
</dbReference>
<dbReference type="InterPro" id="IPR011130">
    <property type="entry name" value="SecA_preprotein_X-link_dom"/>
</dbReference>
<dbReference type="InterPro" id="IPR044722">
    <property type="entry name" value="SecA_SF2_C"/>
</dbReference>
<dbReference type="InterPro" id="IPR011116">
    <property type="entry name" value="SecA_Wing/Scaffold"/>
</dbReference>
<dbReference type="InterPro" id="IPR036266">
    <property type="entry name" value="SecA_Wing/Scaffold_sf"/>
</dbReference>
<dbReference type="InterPro" id="IPR036670">
    <property type="entry name" value="SecA_X-link_sf"/>
</dbReference>
<dbReference type="NCBIfam" id="NF009538">
    <property type="entry name" value="PRK12904.1"/>
    <property type="match status" value="1"/>
</dbReference>
<dbReference type="NCBIfam" id="TIGR00963">
    <property type="entry name" value="secA"/>
    <property type="match status" value="1"/>
</dbReference>
<dbReference type="PANTHER" id="PTHR30612:SF0">
    <property type="entry name" value="CHLOROPLAST PROTEIN-TRANSPORTING ATPASE"/>
    <property type="match status" value="1"/>
</dbReference>
<dbReference type="PANTHER" id="PTHR30612">
    <property type="entry name" value="SECA INNER MEMBRANE COMPONENT OF SEC PROTEIN SECRETION SYSTEM"/>
    <property type="match status" value="1"/>
</dbReference>
<dbReference type="Pfam" id="PF21090">
    <property type="entry name" value="P-loop_SecA"/>
    <property type="match status" value="1"/>
</dbReference>
<dbReference type="Pfam" id="PF02810">
    <property type="entry name" value="SEC-C"/>
    <property type="match status" value="1"/>
</dbReference>
<dbReference type="Pfam" id="PF07517">
    <property type="entry name" value="SecA_DEAD"/>
    <property type="match status" value="1"/>
</dbReference>
<dbReference type="Pfam" id="PF01043">
    <property type="entry name" value="SecA_PP_bind"/>
    <property type="match status" value="1"/>
</dbReference>
<dbReference type="Pfam" id="PF07516">
    <property type="entry name" value="SecA_SW"/>
    <property type="match status" value="1"/>
</dbReference>
<dbReference type="PRINTS" id="PR00906">
    <property type="entry name" value="SECA"/>
</dbReference>
<dbReference type="SMART" id="SM00957">
    <property type="entry name" value="SecA_DEAD"/>
    <property type="match status" value="1"/>
</dbReference>
<dbReference type="SMART" id="SM00958">
    <property type="entry name" value="SecA_PP_bind"/>
    <property type="match status" value="1"/>
</dbReference>
<dbReference type="SUPFAM" id="SSF81886">
    <property type="entry name" value="Helical scaffold and wing domains of SecA"/>
    <property type="match status" value="1"/>
</dbReference>
<dbReference type="SUPFAM" id="SSF52540">
    <property type="entry name" value="P-loop containing nucleoside triphosphate hydrolases"/>
    <property type="match status" value="2"/>
</dbReference>
<dbReference type="SUPFAM" id="SSF81767">
    <property type="entry name" value="Pre-protein crosslinking domain of SecA"/>
    <property type="match status" value="1"/>
</dbReference>
<dbReference type="PROSITE" id="PS51196">
    <property type="entry name" value="SECA_MOTOR_DEAD"/>
    <property type="match status" value="1"/>
</dbReference>
<name>SECA_PSEU2</name>
<keyword id="KW-0067">ATP-binding</keyword>
<keyword id="KW-0997">Cell inner membrane</keyword>
<keyword id="KW-1003">Cell membrane</keyword>
<keyword id="KW-0963">Cytoplasm</keyword>
<keyword id="KW-0472">Membrane</keyword>
<keyword id="KW-0479">Metal-binding</keyword>
<keyword id="KW-0547">Nucleotide-binding</keyword>
<keyword id="KW-0653">Protein transport</keyword>
<keyword id="KW-1278">Translocase</keyword>
<keyword id="KW-0811">Translocation</keyword>
<keyword id="KW-0813">Transport</keyword>
<keyword id="KW-0862">Zinc</keyword>
<organism>
    <name type="scientific">Pseudomonas syringae pv. syringae (strain B728a)</name>
    <dbReference type="NCBI Taxonomy" id="205918"/>
    <lineage>
        <taxon>Bacteria</taxon>
        <taxon>Pseudomonadati</taxon>
        <taxon>Pseudomonadota</taxon>
        <taxon>Gammaproteobacteria</taxon>
        <taxon>Pseudomonadales</taxon>
        <taxon>Pseudomonadaceae</taxon>
        <taxon>Pseudomonas</taxon>
        <taxon>Pseudomonas syringae</taxon>
    </lineage>
</organism>
<evidence type="ECO:0000255" key="1">
    <source>
        <dbReference type="HAMAP-Rule" id="MF_01382"/>
    </source>
</evidence>
<gene>
    <name evidence="1" type="primary">secA</name>
    <name type="ordered locus">Psyr_4094</name>
</gene>
<protein>
    <recommendedName>
        <fullName evidence="1">Protein translocase subunit SecA</fullName>
        <ecNumber evidence="1">7.4.2.8</ecNumber>
    </recommendedName>
</protein>
<comment type="function">
    <text evidence="1">Part of the Sec protein translocase complex. Interacts with the SecYEG preprotein conducting channel. Has a central role in coupling the hydrolysis of ATP to the transfer of proteins into and across the cell membrane, serving both as a receptor for the preprotein-SecB complex and as an ATP-driven molecular motor driving the stepwise translocation of polypeptide chains across the membrane.</text>
</comment>
<comment type="catalytic activity">
    <reaction evidence="1">
        <text>ATP + H2O + cellular proteinSide 1 = ADP + phosphate + cellular proteinSide 2.</text>
        <dbReference type="EC" id="7.4.2.8"/>
    </reaction>
</comment>
<comment type="cofactor">
    <cofactor evidence="1">
        <name>Zn(2+)</name>
        <dbReference type="ChEBI" id="CHEBI:29105"/>
    </cofactor>
    <text evidence="1">May bind 1 zinc ion per subunit.</text>
</comment>
<comment type="subunit">
    <text evidence="1">Monomer and homodimer. Part of the essential Sec protein translocation apparatus which comprises SecA, SecYEG and auxiliary proteins SecDF-YajC and YidC.</text>
</comment>
<comment type="subcellular location">
    <subcellularLocation>
        <location evidence="1">Cell inner membrane</location>
        <topology evidence="1">Peripheral membrane protein</topology>
        <orientation evidence="1">Cytoplasmic side</orientation>
    </subcellularLocation>
    <subcellularLocation>
        <location evidence="1">Cytoplasm</location>
    </subcellularLocation>
    <text evidence="1">Distribution is 50-50.</text>
</comment>
<comment type="similarity">
    <text evidence="1">Belongs to the SecA family.</text>
</comment>
<sequence>MFAPLLKKLFGSKNEREVKRMLKTVQIVNAFEEQMVALSDEQLRAKTEEFKARIAKGETLDQLLPEAFAVAREAGKRVMGMRHFDVQLIGGMTLHEGQIAEMRTGEGKTLVGTLAVYLNALSGKGVHVVTVNDYLARRDANWMRPLYEFLGLTVGIVTPFQPPEEKRAAYAADITYGTNNEYGFDYLRDNMAFSMDDKFQRELNFAVIDEVDSILIDEARTPLIISGQAEDSSKLYTEINRLIPKLEQHIEEVEGEVTKAGHFTVDEKTRQVELNEAGHQFIEEMLTEVGLLAEGESLYSAHNLGLLTHVYAGLRAHKLFNRNVEYIVSDGQVLLVDEHTGRTMPGRRLSEGLHQAIEAKEGLNIQAESQTLASTTFQNYFRLYNKLSGMTGTADTEAFEFHQIYNLAVMVIPPNKPLARKDFNDLVYLTAEEKYAAIVTDIKACIAENRPVLVGTATIETSEHMSNLLNKEGIEHKVLNAKFHEKEAEIIAQAGRPGALTIATNMAGRGTDILLGGNWEVEVANLEDPTPEQIAQIKADWQKRHQQVIEAGGLHVIASERHESRRIDNQLRGRAGRQGDTGSSRFYLSLEDSLMRIFASDRVKNFMKALGMQSGEAIEHRMVTNAIEKAQRKVEGRNFDIRKQLLEFDDVANEQRKVIYHMRNTLLAAENIGETIADFREEVLNNLISQHIPPQSLPEQWNVAGLESALNTDFAVQLPIQQWLDEDDKLHEDSLREKIMAQLLVAYNEKEDQASAEALRSFEKQILLRVLDDLWKDHLSTMDHLRHGIHLRGYAQKNPKQEYKRESFTLFQELLDSIKRDTIRVLSHVQVRREDPEEEEARLRQDAEELASRMQFEHAPAPGIEQPLLDEEGGGAPVAVASEPVRNDQKLGRNELCWCGSGKKFKHCHGQIN</sequence>
<proteinExistence type="inferred from homology"/>
<accession>Q4ZNZ8</accession>
<reference key="1">
    <citation type="journal article" date="2005" name="Proc. Natl. Acad. Sci. U.S.A.">
        <title>Comparison of the complete genome sequences of Pseudomonas syringae pv. syringae B728a and pv. tomato DC3000.</title>
        <authorList>
            <person name="Feil H."/>
            <person name="Feil W.S."/>
            <person name="Chain P."/>
            <person name="Larimer F."/>
            <person name="Dibartolo G."/>
            <person name="Copeland A."/>
            <person name="Lykidis A."/>
            <person name="Trong S."/>
            <person name="Nolan M."/>
            <person name="Goltsman E."/>
            <person name="Thiel J."/>
            <person name="Malfatti S."/>
            <person name="Loper J.E."/>
            <person name="Lapidus A."/>
            <person name="Detter J.C."/>
            <person name="Land M."/>
            <person name="Richardson P.M."/>
            <person name="Kyrpides N.C."/>
            <person name="Ivanova N."/>
            <person name="Lindow S.E."/>
        </authorList>
    </citation>
    <scope>NUCLEOTIDE SEQUENCE [LARGE SCALE GENOMIC DNA]</scope>
    <source>
        <strain>B728a</strain>
    </source>
</reference>